<proteinExistence type="inferred from homology"/>
<feature type="chain" id="PRO_0000375379" description="YcgL domain-containing protein Shewmr7_2249">
    <location>
        <begin position="1"/>
        <end position="92"/>
    </location>
</feature>
<feature type="domain" description="YcgL" evidence="1">
    <location>
        <begin position="1"/>
        <end position="85"/>
    </location>
</feature>
<evidence type="ECO:0000255" key="1">
    <source>
        <dbReference type="HAMAP-Rule" id="MF_01866"/>
    </source>
</evidence>
<gene>
    <name type="ordered locus">Shewmr7_2249</name>
</gene>
<protein>
    <recommendedName>
        <fullName evidence="1">YcgL domain-containing protein Shewmr7_2249</fullName>
    </recommendedName>
</protein>
<name>Y2249_SHESR</name>
<organism>
    <name type="scientific">Shewanella sp. (strain MR-7)</name>
    <dbReference type="NCBI Taxonomy" id="60481"/>
    <lineage>
        <taxon>Bacteria</taxon>
        <taxon>Pseudomonadati</taxon>
        <taxon>Pseudomonadota</taxon>
        <taxon>Gammaproteobacteria</taxon>
        <taxon>Alteromonadales</taxon>
        <taxon>Shewanellaceae</taxon>
        <taxon>Shewanella</taxon>
    </lineage>
</organism>
<dbReference type="EMBL" id="CP000444">
    <property type="protein sequence ID" value="ABI43237.1"/>
    <property type="molecule type" value="Genomic_DNA"/>
</dbReference>
<dbReference type="SMR" id="Q0HUG8"/>
<dbReference type="KEGG" id="shm:Shewmr7_2249"/>
<dbReference type="HOGENOM" id="CLU_155118_1_0_6"/>
<dbReference type="Gene3D" id="3.10.510.20">
    <property type="entry name" value="YcgL domain"/>
    <property type="match status" value="1"/>
</dbReference>
<dbReference type="HAMAP" id="MF_01866">
    <property type="entry name" value="UPF0745"/>
    <property type="match status" value="1"/>
</dbReference>
<dbReference type="InterPro" id="IPR038068">
    <property type="entry name" value="YcgL-like_sf"/>
</dbReference>
<dbReference type="InterPro" id="IPR027354">
    <property type="entry name" value="YcgL_dom"/>
</dbReference>
<dbReference type="PANTHER" id="PTHR38109">
    <property type="entry name" value="PROTEIN YCGL"/>
    <property type="match status" value="1"/>
</dbReference>
<dbReference type="PANTHER" id="PTHR38109:SF1">
    <property type="entry name" value="PROTEIN YCGL"/>
    <property type="match status" value="1"/>
</dbReference>
<dbReference type="Pfam" id="PF05166">
    <property type="entry name" value="YcgL"/>
    <property type="match status" value="1"/>
</dbReference>
<dbReference type="SUPFAM" id="SSF160191">
    <property type="entry name" value="YcgL-like"/>
    <property type="match status" value="1"/>
</dbReference>
<dbReference type="PROSITE" id="PS51648">
    <property type="entry name" value="YCGL"/>
    <property type="match status" value="1"/>
</dbReference>
<accession>Q0HUG8</accession>
<reference key="1">
    <citation type="submission" date="2006-08" db="EMBL/GenBank/DDBJ databases">
        <title>Complete sequence of chromosome 1 of Shewanella sp. MR-7.</title>
        <authorList>
            <person name="Copeland A."/>
            <person name="Lucas S."/>
            <person name="Lapidus A."/>
            <person name="Barry K."/>
            <person name="Detter J.C."/>
            <person name="Glavina del Rio T."/>
            <person name="Hammon N."/>
            <person name="Israni S."/>
            <person name="Dalin E."/>
            <person name="Tice H."/>
            <person name="Pitluck S."/>
            <person name="Kiss H."/>
            <person name="Brettin T."/>
            <person name="Bruce D."/>
            <person name="Han C."/>
            <person name="Tapia R."/>
            <person name="Gilna P."/>
            <person name="Schmutz J."/>
            <person name="Larimer F."/>
            <person name="Land M."/>
            <person name="Hauser L."/>
            <person name="Kyrpides N."/>
            <person name="Mikhailova N."/>
            <person name="Nealson K."/>
            <person name="Konstantinidis K."/>
            <person name="Klappenbach J."/>
            <person name="Tiedje J."/>
            <person name="Richardson P."/>
        </authorList>
    </citation>
    <scope>NUCLEOTIDE SEQUENCE [LARGE SCALE GENOMIC DNA]</scope>
    <source>
        <strain>MR-7</strain>
    </source>
</reference>
<sequence length="92" mass="10381">MLCAVYKSSRKADTYLFVNKRDCFDDVPQALLDMFGVPQLVMVFPIAKRESLGIADIQKVRAALEEKGFYLQIPPPQVNLLAEHRVSLGIKD</sequence>